<dbReference type="EC" id="7.4.2.11" evidence="1"/>
<dbReference type="EMBL" id="AE017194">
    <property type="protein sequence ID" value="AAS39277.1"/>
    <property type="molecule type" value="Genomic_DNA"/>
</dbReference>
<dbReference type="SMR" id="Q73EL7"/>
<dbReference type="KEGG" id="bca:BCE_0341"/>
<dbReference type="HOGENOM" id="CLU_000604_1_3_9"/>
<dbReference type="Proteomes" id="UP000002527">
    <property type="component" value="Chromosome"/>
</dbReference>
<dbReference type="GO" id="GO:0005886">
    <property type="term" value="C:plasma membrane"/>
    <property type="evidence" value="ECO:0007669"/>
    <property type="project" value="UniProtKB-SubCell"/>
</dbReference>
<dbReference type="GO" id="GO:0033232">
    <property type="term" value="F:ABC-type D-methionine transporter activity"/>
    <property type="evidence" value="ECO:0007669"/>
    <property type="project" value="UniProtKB-EC"/>
</dbReference>
<dbReference type="GO" id="GO:0005524">
    <property type="term" value="F:ATP binding"/>
    <property type="evidence" value="ECO:0007669"/>
    <property type="project" value="UniProtKB-KW"/>
</dbReference>
<dbReference type="GO" id="GO:0016887">
    <property type="term" value="F:ATP hydrolysis activity"/>
    <property type="evidence" value="ECO:0007669"/>
    <property type="project" value="InterPro"/>
</dbReference>
<dbReference type="CDD" id="cd03258">
    <property type="entry name" value="ABC_MetN_methionine_transporter"/>
    <property type="match status" value="1"/>
</dbReference>
<dbReference type="FunFam" id="3.40.50.300:FF:000233">
    <property type="entry name" value="Methionine import ATP-binding protein MetN"/>
    <property type="match status" value="1"/>
</dbReference>
<dbReference type="Gene3D" id="3.30.70.260">
    <property type="match status" value="1"/>
</dbReference>
<dbReference type="Gene3D" id="3.40.50.300">
    <property type="entry name" value="P-loop containing nucleotide triphosphate hydrolases"/>
    <property type="match status" value="1"/>
</dbReference>
<dbReference type="InterPro" id="IPR003593">
    <property type="entry name" value="AAA+_ATPase"/>
</dbReference>
<dbReference type="InterPro" id="IPR003439">
    <property type="entry name" value="ABC_transporter-like_ATP-bd"/>
</dbReference>
<dbReference type="InterPro" id="IPR017871">
    <property type="entry name" value="ABC_transporter-like_CS"/>
</dbReference>
<dbReference type="InterPro" id="IPR045865">
    <property type="entry name" value="ACT-like_dom_sf"/>
</dbReference>
<dbReference type="InterPro" id="IPR041701">
    <property type="entry name" value="MetN_ABC"/>
</dbReference>
<dbReference type="InterPro" id="IPR050086">
    <property type="entry name" value="MetN_ABC_transporter-like"/>
</dbReference>
<dbReference type="InterPro" id="IPR018449">
    <property type="entry name" value="NIL_domain"/>
</dbReference>
<dbReference type="InterPro" id="IPR027417">
    <property type="entry name" value="P-loop_NTPase"/>
</dbReference>
<dbReference type="PANTHER" id="PTHR43166">
    <property type="entry name" value="AMINO ACID IMPORT ATP-BINDING PROTEIN"/>
    <property type="match status" value="1"/>
</dbReference>
<dbReference type="PANTHER" id="PTHR43166:SF30">
    <property type="entry name" value="METHIONINE IMPORT ATP-BINDING PROTEIN METN"/>
    <property type="match status" value="1"/>
</dbReference>
<dbReference type="Pfam" id="PF00005">
    <property type="entry name" value="ABC_tran"/>
    <property type="match status" value="1"/>
</dbReference>
<dbReference type="Pfam" id="PF09383">
    <property type="entry name" value="NIL"/>
    <property type="match status" value="1"/>
</dbReference>
<dbReference type="SMART" id="SM00382">
    <property type="entry name" value="AAA"/>
    <property type="match status" value="1"/>
</dbReference>
<dbReference type="SMART" id="SM00930">
    <property type="entry name" value="NIL"/>
    <property type="match status" value="1"/>
</dbReference>
<dbReference type="SUPFAM" id="SSF55021">
    <property type="entry name" value="ACT-like"/>
    <property type="match status" value="1"/>
</dbReference>
<dbReference type="SUPFAM" id="SSF52540">
    <property type="entry name" value="P-loop containing nucleoside triphosphate hydrolases"/>
    <property type="match status" value="1"/>
</dbReference>
<dbReference type="PROSITE" id="PS00211">
    <property type="entry name" value="ABC_TRANSPORTER_1"/>
    <property type="match status" value="1"/>
</dbReference>
<dbReference type="PROSITE" id="PS50893">
    <property type="entry name" value="ABC_TRANSPORTER_2"/>
    <property type="match status" value="1"/>
</dbReference>
<dbReference type="PROSITE" id="PS51264">
    <property type="entry name" value="METN"/>
    <property type="match status" value="1"/>
</dbReference>
<organism>
    <name type="scientific">Bacillus cereus (strain ATCC 10987 / NRS 248)</name>
    <dbReference type="NCBI Taxonomy" id="222523"/>
    <lineage>
        <taxon>Bacteria</taxon>
        <taxon>Bacillati</taxon>
        <taxon>Bacillota</taxon>
        <taxon>Bacilli</taxon>
        <taxon>Bacillales</taxon>
        <taxon>Bacillaceae</taxon>
        <taxon>Bacillus</taxon>
        <taxon>Bacillus cereus group</taxon>
    </lineage>
</organism>
<comment type="function">
    <text evidence="1">Part of the ABC transporter complex MetNIQ involved in methionine import. Responsible for energy coupling to the transport system.</text>
</comment>
<comment type="catalytic activity">
    <reaction evidence="1">
        <text>L-methionine(out) + ATP + H2O = L-methionine(in) + ADP + phosphate + H(+)</text>
        <dbReference type="Rhea" id="RHEA:29779"/>
        <dbReference type="ChEBI" id="CHEBI:15377"/>
        <dbReference type="ChEBI" id="CHEBI:15378"/>
        <dbReference type="ChEBI" id="CHEBI:30616"/>
        <dbReference type="ChEBI" id="CHEBI:43474"/>
        <dbReference type="ChEBI" id="CHEBI:57844"/>
        <dbReference type="ChEBI" id="CHEBI:456216"/>
        <dbReference type="EC" id="7.4.2.11"/>
    </reaction>
</comment>
<comment type="catalytic activity">
    <reaction evidence="1">
        <text>D-methionine(out) + ATP + H2O = D-methionine(in) + ADP + phosphate + H(+)</text>
        <dbReference type="Rhea" id="RHEA:29767"/>
        <dbReference type="ChEBI" id="CHEBI:15377"/>
        <dbReference type="ChEBI" id="CHEBI:15378"/>
        <dbReference type="ChEBI" id="CHEBI:30616"/>
        <dbReference type="ChEBI" id="CHEBI:43474"/>
        <dbReference type="ChEBI" id="CHEBI:57932"/>
        <dbReference type="ChEBI" id="CHEBI:456216"/>
        <dbReference type="EC" id="7.4.2.11"/>
    </reaction>
</comment>
<comment type="subunit">
    <text evidence="1">The complex is composed of two ATP-binding proteins (MetN), two transmembrane proteins (MetI) and a solute-binding protein (MetQ).</text>
</comment>
<comment type="subcellular location">
    <subcellularLocation>
        <location evidence="1">Cell membrane</location>
        <topology evidence="1">Peripheral membrane protein</topology>
    </subcellularLocation>
</comment>
<comment type="similarity">
    <text evidence="1">Belongs to the ABC transporter superfamily. Methionine importer (TC 3.A.1.24) family.</text>
</comment>
<proteinExistence type="inferred from homology"/>
<reference key="1">
    <citation type="journal article" date="2004" name="Nucleic Acids Res.">
        <title>The genome sequence of Bacillus cereus ATCC 10987 reveals metabolic adaptations and a large plasmid related to Bacillus anthracis pXO1.</title>
        <authorList>
            <person name="Rasko D.A."/>
            <person name="Ravel J."/>
            <person name="Oekstad O.A."/>
            <person name="Helgason E."/>
            <person name="Cer R.Z."/>
            <person name="Jiang L."/>
            <person name="Shores K.A."/>
            <person name="Fouts D.E."/>
            <person name="Tourasse N.J."/>
            <person name="Angiuoli S.V."/>
            <person name="Kolonay J.F."/>
            <person name="Nelson W.C."/>
            <person name="Kolstoe A.-B."/>
            <person name="Fraser C.M."/>
            <person name="Read T.D."/>
        </authorList>
    </citation>
    <scope>NUCLEOTIDE SEQUENCE [LARGE SCALE GENOMIC DNA]</scope>
    <source>
        <strain>ATCC 10987 / NRS 248</strain>
    </source>
</reference>
<keyword id="KW-0029">Amino-acid transport</keyword>
<keyword id="KW-0067">ATP-binding</keyword>
<keyword id="KW-1003">Cell membrane</keyword>
<keyword id="KW-0472">Membrane</keyword>
<keyword id="KW-0547">Nucleotide-binding</keyword>
<keyword id="KW-1278">Translocase</keyword>
<keyword id="KW-0813">Transport</keyword>
<protein>
    <recommendedName>
        <fullName evidence="1">Methionine import ATP-binding protein MetN 2</fullName>
        <ecNumber evidence="1">7.4.2.11</ecNumber>
    </recommendedName>
</protein>
<name>METN2_BACC1</name>
<gene>
    <name evidence="1" type="primary">metN2</name>
    <name type="ordered locus">BCE_0341</name>
</gene>
<feature type="chain" id="PRO_0000270233" description="Methionine import ATP-binding protein MetN 2">
    <location>
        <begin position="1"/>
        <end position="339"/>
    </location>
</feature>
<feature type="domain" description="ABC transporter" evidence="1">
    <location>
        <begin position="2"/>
        <end position="241"/>
    </location>
</feature>
<feature type="binding site" evidence="1">
    <location>
        <begin position="38"/>
        <end position="45"/>
    </location>
    <ligand>
        <name>ATP</name>
        <dbReference type="ChEBI" id="CHEBI:30616"/>
    </ligand>
</feature>
<sequence length="339" mass="37963">MISFNNVSKVYETGGQSVHAVEDVTLSVEKGEIFGIIGFSGAGKSTLLRLVNMLERPTAGTISIDDKEITSLSTKELRKLRQRIGMIFQSFNLFNSRTVFGNIAYPLKLAKVPKNEIKERVNELLKFVGLEDKANNYPEQLSGGQKQRVGIARALATSPDILICDEATSALDPETTTEILNLLKKVNREYNLTILLITHEMHVVKEICHRVAVMEKGKVIEEGKLFDVFTQPKTKTTQNFVRSVINDHLPESVLAKIQNGGQIYRLTFTGEETGQPVLSYIAKNYNVDVNVLYGNIIELQNVLFGNLLVELQGEQREIQKALQHLRLQVQLKEVEAHAS</sequence>
<evidence type="ECO:0000255" key="1">
    <source>
        <dbReference type="HAMAP-Rule" id="MF_01719"/>
    </source>
</evidence>
<accession>Q73EL7</accession>